<organism>
    <name type="scientific">Rattus norvegicus</name>
    <name type="common">Rat</name>
    <dbReference type="NCBI Taxonomy" id="10116"/>
    <lineage>
        <taxon>Eukaryota</taxon>
        <taxon>Metazoa</taxon>
        <taxon>Chordata</taxon>
        <taxon>Craniata</taxon>
        <taxon>Vertebrata</taxon>
        <taxon>Euteleostomi</taxon>
        <taxon>Mammalia</taxon>
        <taxon>Eutheria</taxon>
        <taxon>Euarchontoglires</taxon>
        <taxon>Glires</taxon>
        <taxon>Rodentia</taxon>
        <taxon>Myomorpha</taxon>
        <taxon>Muroidea</taxon>
        <taxon>Muridae</taxon>
        <taxon>Murinae</taxon>
        <taxon>Rattus</taxon>
    </lineage>
</organism>
<keyword id="KW-0007">Acetylation</keyword>
<keyword id="KW-0963">Cytoplasm</keyword>
<keyword id="KW-0378">Hydrolase</keyword>
<keyword id="KW-0460">Magnesium</keyword>
<keyword id="KW-0464">Manganese</keyword>
<keyword id="KW-0479">Metal-binding</keyword>
<keyword id="KW-0546">Nucleotide metabolism</keyword>
<keyword id="KW-0547">Nucleotide-binding</keyword>
<keyword id="KW-0597">Phosphoprotein</keyword>
<keyword id="KW-1185">Reference proteome</keyword>
<evidence type="ECO:0000250" key="1">
    <source>
        <dbReference type="UniProtKB" id="Q9BY32"/>
    </source>
</evidence>
<evidence type="ECO:0000250" key="2">
    <source>
        <dbReference type="UniProtKB" id="Q9D892"/>
    </source>
</evidence>
<evidence type="ECO:0000255" key="3">
    <source>
        <dbReference type="HAMAP-Rule" id="MF_03148"/>
    </source>
</evidence>
<gene>
    <name type="primary">Itpa</name>
</gene>
<dbReference type="EC" id="3.6.1.66" evidence="3"/>
<dbReference type="EMBL" id="CH473949">
    <property type="protein sequence ID" value="EDL80207.1"/>
    <property type="molecule type" value="Genomic_DNA"/>
</dbReference>
<dbReference type="RefSeq" id="NP_001101244.1">
    <property type="nucleotide sequence ID" value="NM_001107774.1"/>
</dbReference>
<dbReference type="SMR" id="D3ZW55"/>
<dbReference type="FunCoup" id="D3ZW55">
    <property type="interactions" value="2092"/>
</dbReference>
<dbReference type="IntAct" id="D3ZW55">
    <property type="interactions" value="2"/>
</dbReference>
<dbReference type="STRING" id="10116.ENSRNOP00000028838"/>
<dbReference type="PhosphoSitePlus" id="D3ZW55"/>
<dbReference type="SwissPalm" id="D3ZW55"/>
<dbReference type="jPOST" id="D3ZW55"/>
<dbReference type="PaxDb" id="10116-ENSRNOP00000028838"/>
<dbReference type="PeptideAtlas" id="D3ZW55"/>
<dbReference type="GeneID" id="311422"/>
<dbReference type="KEGG" id="rno:311422"/>
<dbReference type="UCSC" id="RGD:1589751">
    <property type="organism name" value="rat"/>
</dbReference>
<dbReference type="AGR" id="RGD:1589751"/>
<dbReference type="CTD" id="3704"/>
<dbReference type="RGD" id="1589751">
    <property type="gene designation" value="Itpa"/>
</dbReference>
<dbReference type="VEuPathDB" id="HostDB:ENSRNOG00000021233"/>
<dbReference type="eggNOG" id="KOG3222">
    <property type="taxonomic scope" value="Eukaryota"/>
</dbReference>
<dbReference type="HOGENOM" id="CLU_082080_1_1_1"/>
<dbReference type="InParanoid" id="D3ZW55"/>
<dbReference type="OrthoDB" id="14389at9989"/>
<dbReference type="PhylomeDB" id="D3ZW55"/>
<dbReference type="TreeFam" id="TF105614"/>
<dbReference type="Reactome" id="R-RNO-74259">
    <property type="pathway name" value="Purine catabolism"/>
</dbReference>
<dbReference type="Reactome" id="R-RNO-9755088">
    <property type="pathway name" value="Ribavirin ADME"/>
</dbReference>
<dbReference type="PRO" id="PR:D3ZW55"/>
<dbReference type="Proteomes" id="UP000002494">
    <property type="component" value="Chromosome 3"/>
</dbReference>
<dbReference type="Proteomes" id="UP000234681">
    <property type="component" value="Chromosome 3"/>
</dbReference>
<dbReference type="Bgee" id="ENSRNOG00000021233">
    <property type="expression patterns" value="Expressed in thymus and 20 other cell types or tissues"/>
</dbReference>
<dbReference type="GO" id="GO:0005737">
    <property type="term" value="C:cytoplasm"/>
    <property type="evidence" value="ECO:0000318"/>
    <property type="project" value="GO_Central"/>
</dbReference>
<dbReference type="GO" id="GO:0035870">
    <property type="term" value="F:dITP diphosphatase activity"/>
    <property type="evidence" value="ECO:0000266"/>
    <property type="project" value="RGD"/>
</dbReference>
<dbReference type="GO" id="GO:0042802">
    <property type="term" value="F:identical protein binding"/>
    <property type="evidence" value="ECO:0000266"/>
    <property type="project" value="RGD"/>
</dbReference>
<dbReference type="GO" id="GO:0036220">
    <property type="term" value="F:ITP diphosphatase activity"/>
    <property type="evidence" value="ECO:0007669"/>
    <property type="project" value="RHEA"/>
</dbReference>
<dbReference type="GO" id="GO:0046872">
    <property type="term" value="F:metal ion binding"/>
    <property type="evidence" value="ECO:0007669"/>
    <property type="project" value="UniProtKB-KW"/>
</dbReference>
<dbReference type="GO" id="GO:0047429">
    <property type="term" value="F:nucleoside triphosphate diphosphatase activity"/>
    <property type="evidence" value="ECO:0000266"/>
    <property type="project" value="RGD"/>
</dbReference>
<dbReference type="GO" id="GO:0000166">
    <property type="term" value="F:nucleotide binding"/>
    <property type="evidence" value="ECO:0007669"/>
    <property type="project" value="UniProtKB-KW"/>
</dbReference>
<dbReference type="GO" id="GO:0036222">
    <property type="term" value="F:XTP diphosphatase activity"/>
    <property type="evidence" value="ECO:0007669"/>
    <property type="project" value="RHEA"/>
</dbReference>
<dbReference type="GO" id="GO:0051276">
    <property type="term" value="P:chromosome organization"/>
    <property type="evidence" value="ECO:0000266"/>
    <property type="project" value="RGD"/>
</dbReference>
<dbReference type="GO" id="GO:0009204">
    <property type="term" value="P:deoxyribonucleoside triphosphate catabolic process"/>
    <property type="evidence" value="ECO:0007669"/>
    <property type="project" value="UniProtKB-UniRule"/>
</dbReference>
<dbReference type="GO" id="GO:0006193">
    <property type="term" value="P:ITP catabolic process"/>
    <property type="evidence" value="ECO:0000266"/>
    <property type="project" value="RGD"/>
</dbReference>
<dbReference type="GO" id="GO:0009143">
    <property type="term" value="P:nucleoside triphosphate catabolic process"/>
    <property type="evidence" value="ECO:0000318"/>
    <property type="project" value="GO_Central"/>
</dbReference>
<dbReference type="CDD" id="cd00515">
    <property type="entry name" value="HAM1"/>
    <property type="match status" value="1"/>
</dbReference>
<dbReference type="FunFam" id="3.90.950.10:FF:000003">
    <property type="entry name" value="Inosine triphosphate pyrophosphatase"/>
    <property type="match status" value="1"/>
</dbReference>
<dbReference type="Gene3D" id="3.90.950.10">
    <property type="match status" value="1"/>
</dbReference>
<dbReference type="HAMAP" id="MF_03148">
    <property type="entry name" value="HAM1_NTPase"/>
    <property type="match status" value="1"/>
</dbReference>
<dbReference type="InterPro" id="IPR027502">
    <property type="entry name" value="ITPase"/>
</dbReference>
<dbReference type="InterPro" id="IPR029001">
    <property type="entry name" value="ITPase-like_fam"/>
</dbReference>
<dbReference type="InterPro" id="IPR002637">
    <property type="entry name" value="RdgB/HAM1"/>
</dbReference>
<dbReference type="NCBIfam" id="TIGR00042">
    <property type="entry name" value="RdgB/HAM1 family non-canonical purine NTP pyrophosphatase"/>
    <property type="match status" value="1"/>
</dbReference>
<dbReference type="PANTHER" id="PTHR11067:SF9">
    <property type="entry name" value="INOSINE TRIPHOSPHATE PYROPHOSPHATASE"/>
    <property type="match status" value="1"/>
</dbReference>
<dbReference type="PANTHER" id="PTHR11067">
    <property type="entry name" value="INOSINE TRIPHOSPHATE PYROPHOSPHATASE/HAM1 PROTEIN"/>
    <property type="match status" value="1"/>
</dbReference>
<dbReference type="Pfam" id="PF01725">
    <property type="entry name" value="Ham1p_like"/>
    <property type="match status" value="1"/>
</dbReference>
<dbReference type="SUPFAM" id="SSF52972">
    <property type="entry name" value="ITPase-like"/>
    <property type="match status" value="1"/>
</dbReference>
<comment type="function">
    <text evidence="3">Pyrophosphatase that hydrolyzes the non-canonical purine nucleotides inosine triphosphate (ITP), deoxyinosine triphosphate (dITP) as well as 2'-deoxy-N-6-hydroxylaminopurine triphosphate (dHAPTP) and xanthosine 5'-triphosphate (XTP) to their respective monophosphate derivatives. The enzyme does not distinguish between the deoxy- and ribose forms. Probably excludes non-canonical purines from RNA and DNA precursor pools, thus preventing their incorporation into RNA and DNA and avoiding chromosomal lesions.</text>
</comment>
<comment type="catalytic activity">
    <reaction evidence="3">
        <text>ITP + H2O = IMP + diphosphate + H(+)</text>
        <dbReference type="Rhea" id="RHEA:29399"/>
        <dbReference type="ChEBI" id="CHEBI:15377"/>
        <dbReference type="ChEBI" id="CHEBI:15378"/>
        <dbReference type="ChEBI" id="CHEBI:33019"/>
        <dbReference type="ChEBI" id="CHEBI:58053"/>
        <dbReference type="ChEBI" id="CHEBI:61402"/>
        <dbReference type="EC" id="3.6.1.66"/>
    </reaction>
    <physiologicalReaction direction="left-to-right" evidence="3">
        <dbReference type="Rhea" id="RHEA:29400"/>
    </physiologicalReaction>
</comment>
<comment type="catalytic activity">
    <reaction evidence="3">
        <text>dITP + H2O = dIMP + diphosphate + H(+)</text>
        <dbReference type="Rhea" id="RHEA:28342"/>
        <dbReference type="ChEBI" id="CHEBI:15377"/>
        <dbReference type="ChEBI" id="CHEBI:15378"/>
        <dbReference type="ChEBI" id="CHEBI:33019"/>
        <dbReference type="ChEBI" id="CHEBI:61194"/>
        <dbReference type="ChEBI" id="CHEBI:61382"/>
        <dbReference type="EC" id="3.6.1.66"/>
    </reaction>
    <physiologicalReaction direction="left-to-right" evidence="3">
        <dbReference type="Rhea" id="RHEA:28343"/>
    </physiologicalReaction>
</comment>
<comment type="catalytic activity">
    <reaction evidence="3">
        <text>XTP + H2O = XMP + diphosphate + H(+)</text>
        <dbReference type="Rhea" id="RHEA:28610"/>
        <dbReference type="ChEBI" id="CHEBI:15377"/>
        <dbReference type="ChEBI" id="CHEBI:15378"/>
        <dbReference type="ChEBI" id="CHEBI:33019"/>
        <dbReference type="ChEBI" id="CHEBI:57464"/>
        <dbReference type="ChEBI" id="CHEBI:61314"/>
        <dbReference type="EC" id="3.6.1.66"/>
    </reaction>
    <physiologicalReaction direction="left-to-right" evidence="3">
        <dbReference type="Rhea" id="RHEA:28611"/>
    </physiologicalReaction>
</comment>
<comment type="catalytic activity">
    <reaction evidence="3">
        <text>N(6)-hydroxy-dATP + H2O = N(6)-hydroxy-dAMP + diphosphate + H(+)</text>
        <dbReference type="Rhea" id="RHEA:83971"/>
        <dbReference type="ChEBI" id="CHEBI:15377"/>
        <dbReference type="ChEBI" id="CHEBI:15378"/>
        <dbReference type="ChEBI" id="CHEBI:33019"/>
        <dbReference type="ChEBI" id="CHEBI:233529"/>
        <dbReference type="ChEBI" id="CHEBI:233530"/>
    </reaction>
    <physiologicalReaction direction="left-to-right" evidence="3">
        <dbReference type="Rhea" id="RHEA:83972"/>
    </physiologicalReaction>
</comment>
<comment type="cofactor">
    <cofactor evidence="3">
        <name>Mg(2+)</name>
        <dbReference type="ChEBI" id="CHEBI:18420"/>
    </cofactor>
    <cofactor evidence="3">
        <name>Mn(2+)</name>
        <dbReference type="ChEBI" id="CHEBI:29035"/>
    </cofactor>
    <text evidence="3">Binds 1 divalent metal cation per subunit; can use either Mg(2+) or Mn(2+).</text>
</comment>
<comment type="subunit">
    <text evidence="3">Homodimer.</text>
</comment>
<comment type="subcellular location">
    <subcellularLocation>
        <location evidence="3">Cytoplasm</location>
    </subcellularLocation>
</comment>
<comment type="similarity">
    <text evidence="3">Belongs to the HAM1 NTPase family.</text>
</comment>
<name>ITPA_RAT</name>
<reference key="1">
    <citation type="submission" date="2005-07" db="EMBL/GenBank/DDBJ databases">
        <authorList>
            <person name="Mural R.J."/>
            <person name="Adams M.D."/>
            <person name="Myers E.W."/>
            <person name="Smith H.O."/>
            <person name="Venter J.C."/>
        </authorList>
    </citation>
    <scope>NUCLEOTIDE SEQUENCE [LARGE SCALE GENOMIC DNA]</scope>
</reference>
<sequence length="198" mass="21927">MAASLVGKKIVFVTGNAKKLEEVIQILGDKFPCTLVAQKIDLPEYQGEPDEISIQKCQEAARQVQGPVLVEDTCLCFNALGGLPGPYIKWFLQKLKPEGLYQLLAGFEDKSAYALCTFALSTGDPSQPVLLFRGKTPGQIVMPRGSRDFGWDPCFQPDGYEQTYAEMPKAEKNTISHRFRALFKLQEYFGVTDGAGDH</sequence>
<protein>
    <recommendedName>
        <fullName evidence="3">Inosine triphosphate pyrophosphatase</fullName>
        <shortName evidence="3">ITPase</shortName>
        <shortName evidence="3">Inosine triphosphatase</shortName>
        <ecNumber evidence="3">3.6.1.66</ecNumber>
    </recommendedName>
    <alternativeName>
        <fullName evidence="3">Non-canonical purine NTP pyrophosphatase</fullName>
    </alternativeName>
    <alternativeName>
        <fullName evidence="3">Non-standard purine NTP pyrophosphatase</fullName>
    </alternativeName>
    <alternativeName>
        <fullName evidence="3">Nucleoside-triphosphate diphosphatase</fullName>
    </alternativeName>
    <alternativeName>
        <fullName evidence="3">Nucleoside-triphosphate pyrophosphatase</fullName>
        <shortName evidence="3">NTPase</shortName>
    </alternativeName>
    <alternativeName>
        <fullName evidence="3">XTP/dITP diphosphatase</fullName>
    </alternativeName>
</protein>
<proteinExistence type="inferred from homology"/>
<accession>D3ZW55</accession>
<feature type="initiator methionine" description="Removed" evidence="3">
    <location>
        <position position="1"/>
    </location>
</feature>
<feature type="chain" id="PRO_0000413101" description="Inosine triphosphate pyrophosphatase">
    <location>
        <begin position="2"/>
        <end position="198"/>
    </location>
</feature>
<feature type="binding site" evidence="3">
    <location>
        <begin position="14"/>
        <end position="19"/>
    </location>
    <ligand>
        <name>ITP</name>
        <dbReference type="ChEBI" id="CHEBI:61402"/>
    </ligand>
</feature>
<feature type="binding site" evidence="3">
    <location>
        <position position="44"/>
    </location>
    <ligand>
        <name>Mg(2+)</name>
        <dbReference type="ChEBI" id="CHEBI:18420"/>
    </ligand>
</feature>
<feature type="binding site" evidence="3">
    <location>
        <position position="56"/>
    </location>
    <ligand>
        <name>ITP</name>
        <dbReference type="ChEBI" id="CHEBI:61402"/>
    </ligand>
</feature>
<feature type="binding site" evidence="3">
    <location>
        <begin position="72"/>
        <end position="73"/>
    </location>
    <ligand>
        <name>ITP</name>
        <dbReference type="ChEBI" id="CHEBI:61402"/>
    </ligand>
</feature>
<feature type="binding site" evidence="3">
    <location>
        <position position="89"/>
    </location>
    <ligand>
        <name>ITP</name>
        <dbReference type="ChEBI" id="CHEBI:61402"/>
    </ligand>
</feature>
<feature type="binding site" evidence="3">
    <location>
        <begin position="149"/>
        <end position="152"/>
    </location>
    <ligand>
        <name>ITP</name>
        <dbReference type="ChEBI" id="CHEBI:61402"/>
    </ligand>
</feature>
<feature type="binding site" evidence="3">
    <location>
        <position position="172"/>
    </location>
    <ligand>
        <name>ITP</name>
        <dbReference type="ChEBI" id="CHEBI:61402"/>
    </ligand>
</feature>
<feature type="binding site" evidence="3">
    <location>
        <begin position="177"/>
        <end position="178"/>
    </location>
    <ligand>
        <name>ITP</name>
        <dbReference type="ChEBI" id="CHEBI:61402"/>
    </ligand>
</feature>
<feature type="modified residue" description="N-acetylalanine" evidence="1 3">
    <location>
        <position position="2"/>
    </location>
</feature>
<feature type="modified residue" description="Phosphoserine" evidence="2">
    <location>
        <position position="146"/>
    </location>
</feature>